<dbReference type="EMBL" id="BA000033">
    <property type="protein sequence ID" value="BAB94716.1"/>
    <property type="molecule type" value="Genomic_DNA"/>
</dbReference>
<dbReference type="RefSeq" id="WP_000902805.1">
    <property type="nucleotide sequence ID" value="NC_003923.1"/>
</dbReference>
<dbReference type="KEGG" id="sam:MW0851"/>
<dbReference type="HOGENOM" id="CLU_146641_2_0_9"/>
<dbReference type="GO" id="GO:0005886">
    <property type="term" value="C:plasma membrane"/>
    <property type="evidence" value="ECO:0007669"/>
    <property type="project" value="UniProtKB-SubCell"/>
</dbReference>
<dbReference type="HAMAP" id="MF_01536">
    <property type="entry name" value="UPF0344"/>
    <property type="match status" value="1"/>
</dbReference>
<dbReference type="InterPro" id="IPR010899">
    <property type="entry name" value="UPF0344"/>
</dbReference>
<dbReference type="NCBIfam" id="NF010195">
    <property type="entry name" value="PRK13673.1-2"/>
    <property type="match status" value="1"/>
</dbReference>
<dbReference type="NCBIfam" id="NF010199">
    <property type="entry name" value="PRK13673.1-6"/>
    <property type="match status" value="1"/>
</dbReference>
<dbReference type="Pfam" id="PF07457">
    <property type="entry name" value="DUF1516"/>
    <property type="match status" value="1"/>
</dbReference>
<keyword id="KW-1003">Cell membrane</keyword>
<keyword id="KW-0472">Membrane</keyword>
<keyword id="KW-0812">Transmembrane</keyword>
<keyword id="KW-1133">Transmembrane helix</keyword>
<feature type="chain" id="PRO_0000105898" description="UPF0344 protein MW0851">
    <location>
        <begin position="1"/>
        <end position="129"/>
    </location>
</feature>
<feature type="transmembrane region" description="Helical" evidence="1">
    <location>
        <begin position="1"/>
        <end position="21"/>
    </location>
</feature>
<feature type="transmembrane region" description="Helical" evidence="1">
    <location>
        <begin position="36"/>
        <end position="56"/>
    </location>
</feature>
<feature type="transmembrane region" description="Helical" evidence="1">
    <location>
        <begin position="67"/>
        <end position="87"/>
    </location>
</feature>
<feature type="transmembrane region" description="Helical" evidence="1">
    <location>
        <begin position="99"/>
        <end position="119"/>
    </location>
</feature>
<gene>
    <name type="ordered locus">MW0851</name>
</gene>
<accession>Q7A1B5</accession>
<reference key="1">
    <citation type="journal article" date="2002" name="Lancet">
        <title>Genome and virulence determinants of high virulence community-acquired MRSA.</title>
        <authorList>
            <person name="Baba T."/>
            <person name="Takeuchi F."/>
            <person name="Kuroda M."/>
            <person name="Yuzawa H."/>
            <person name="Aoki K."/>
            <person name="Oguchi A."/>
            <person name="Nagai Y."/>
            <person name="Iwama N."/>
            <person name="Asano K."/>
            <person name="Naimi T."/>
            <person name="Kuroda H."/>
            <person name="Cui L."/>
            <person name="Yamamoto K."/>
            <person name="Hiramatsu K."/>
        </authorList>
    </citation>
    <scope>NUCLEOTIDE SEQUENCE [LARGE SCALE GENOMIC DNA]</scope>
    <source>
        <strain>MW2</strain>
    </source>
</reference>
<protein>
    <recommendedName>
        <fullName evidence="1">UPF0344 protein MW0851</fullName>
    </recommendedName>
</protein>
<name>Y851_STAAW</name>
<evidence type="ECO:0000255" key="1">
    <source>
        <dbReference type="HAMAP-Rule" id="MF_01536"/>
    </source>
</evidence>
<organism>
    <name type="scientific">Staphylococcus aureus (strain MW2)</name>
    <dbReference type="NCBI Taxonomy" id="196620"/>
    <lineage>
        <taxon>Bacteria</taxon>
        <taxon>Bacillati</taxon>
        <taxon>Bacillota</taxon>
        <taxon>Bacilli</taxon>
        <taxon>Bacillales</taxon>
        <taxon>Staphylococcaceae</taxon>
        <taxon>Staphylococcus</taxon>
    </lineage>
</organism>
<comment type="subcellular location">
    <subcellularLocation>
        <location evidence="1">Cell membrane</location>
        <topology evidence="1">Multi-pass membrane protein</topology>
    </subcellularLocation>
</comment>
<comment type="similarity">
    <text evidence="1">Belongs to the UPF0344 family.</text>
</comment>
<sequence length="129" mass="14485">MLHLHILSWVLAIILFIATYLNISKNQGGSPFFKPLHMILRLFMLLTLISGFWILIQSFMNGGANHMLLTLKMLCGVAVVGLMEVSIAKRKRHEQSHKMFWITMALIIITMVLGVILPLGPISKLFGIG</sequence>
<proteinExistence type="inferred from homology"/>